<proteinExistence type="evidence at transcript level"/>
<accession>Q5U3V9</accession>
<accession>A4VAK8</accession>
<accession>Q1L8C5</accession>
<comment type="function">
    <text evidence="2">Component of the endosomal sorting complex required for transport II (ESCRT-II), which is required for multivesicular body (MVB) formation and sorting of endosomal cargo proteins into MVBs, and plays a role in autophagy. The MVB pathway mediates delivery of transmembrane proteins into the lumen of the lysosome for degradation. The ESCRT-II complex is probably involved in the recruitment of the ESCRT-III complex (By similarity).</text>
</comment>
<comment type="subunit">
    <text evidence="2">Component of the endosomal sorting required for transport complex II (ESCRT-II), composed of SNF8, VPS25 and VPS36.</text>
</comment>
<comment type="subcellular location">
    <subcellularLocation>
        <location evidence="1">Cytoplasm</location>
    </subcellularLocation>
</comment>
<comment type="disruption phenotype">
    <text evidence="4">Morpholino knockdown of the gene results in a stunted appearance, reduced pigmentation, small head and eyes, developmental delay, reduced forebrain size, and aberrant optic nerve and optic chiasm morphology.</text>
</comment>
<comment type="similarity">
    <text evidence="5">Belongs to the SNF8 family.</text>
</comment>
<reference key="1">
    <citation type="journal article" date="2013" name="Nature">
        <title>The zebrafish reference genome sequence and its relationship to the human genome.</title>
        <authorList>
            <person name="Howe K."/>
            <person name="Clark M.D."/>
            <person name="Torroja C.F."/>
            <person name="Torrance J."/>
            <person name="Berthelot C."/>
            <person name="Muffato M."/>
            <person name="Collins J.E."/>
            <person name="Humphray S."/>
            <person name="McLaren K."/>
            <person name="Matthews L."/>
            <person name="McLaren S."/>
            <person name="Sealy I."/>
            <person name="Caccamo M."/>
            <person name="Churcher C."/>
            <person name="Scott C."/>
            <person name="Barrett J.C."/>
            <person name="Koch R."/>
            <person name="Rauch G.J."/>
            <person name="White S."/>
            <person name="Chow W."/>
            <person name="Kilian B."/>
            <person name="Quintais L.T."/>
            <person name="Guerra-Assuncao J.A."/>
            <person name="Zhou Y."/>
            <person name="Gu Y."/>
            <person name="Yen J."/>
            <person name="Vogel J.H."/>
            <person name="Eyre T."/>
            <person name="Redmond S."/>
            <person name="Banerjee R."/>
            <person name="Chi J."/>
            <person name="Fu B."/>
            <person name="Langley E."/>
            <person name="Maguire S.F."/>
            <person name="Laird G.K."/>
            <person name="Lloyd D."/>
            <person name="Kenyon E."/>
            <person name="Donaldson S."/>
            <person name="Sehra H."/>
            <person name="Almeida-King J."/>
            <person name="Loveland J."/>
            <person name="Trevanion S."/>
            <person name="Jones M."/>
            <person name="Quail M."/>
            <person name="Willey D."/>
            <person name="Hunt A."/>
            <person name="Burton J."/>
            <person name="Sims S."/>
            <person name="McLay K."/>
            <person name="Plumb B."/>
            <person name="Davis J."/>
            <person name="Clee C."/>
            <person name="Oliver K."/>
            <person name="Clark R."/>
            <person name="Riddle C."/>
            <person name="Elliot D."/>
            <person name="Threadgold G."/>
            <person name="Harden G."/>
            <person name="Ware D."/>
            <person name="Begum S."/>
            <person name="Mortimore B."/>
            <person name="Kerry G."/>
            <person name="Heath P."/>
            <person name="Phillimore B."/>
            <person name="Tracey A."/>
            <person name="Corby N."/>
            <person name="Dunn M."/>
            <person name="Johnson C."/>
            <person name="Wood J."/>
            <person name="Clark S."/>
            <person name="Pelan S."/>
            <person name="Griffiths G."/>
            <person name="Smith M."/>
            <person name="Glithero R."/>
            <person name="Howden P."/>
            <person name="Barker N."/>
            <person name="Lloyd C."/>
            <person name="Stevens C."/>
            <person name="Harley J."/>
            <person name="Holt K."/>
            <person name="Panagiotidis G."/>
            <person name="Lovell J."/>
            <person name="Beasley H."/>
            <person name="Henderson C."/>
            <person name="Gordon D."/>
            <person name="Auger K."/>
            <person name="Wright D."/>
            <person name="Collins J."/>
            <person name="Raisen C."/>
            <person name="Dyer L."/>
            <person name="Leung K."/>
            <person name="Robertson L."/>
            <person name="Ambridge K."/>
            <person name="Leongamornlert D."/>
            <person name="McGuire S."/>
            <person name="Gilderthorp R."/>
            <person name="Griffiths C."/>
            <person name="Manthravadi D."/>
            <person name="Nichol S."/>
            <person name="Barker G."/>
            <person name="Whitehead S."/>
            <person name="Kay M."/>
            <person name="Brown J."/>
            <person name="Murnane C."/>
            <person name="Gray E."/>
            <person name="Humphries M."/>
            <person name="Sycamore N."/>
            <person name="Barker D."/>
            <person name="Saunders D."/>
            <person name="Wallis J."/>
            <person name="Babbage A."/>
            <person name="Hammond S."/>
            <person name="Mashreghi-Mohammadi M."/>
            <person name="Barr L."/>
            <person name="Martin S."/>
            <person name="Wray P."/>
            <person name="Ellington A."/>
            <person name="Matthews N."/>
            <person name="Ellwood M."/>
            <person name="Woodmansey R."/>
            <person name="Clark G."/>
            <person name="Cooper J."/>
            <person name="Tromans A."/>
            <person name="Grafham D."/>
            <person name="Skuce C."/>
            <person name="Pandian R."/>
            <person name="Andrews R."/>
            <person name="Harrison E."/>
            <person name="Kimberley A."/>
            <person name="Garnett J."/>
            <person name="Fosker N."/>
            <person name="Hall R."/>
            <person name="Garner P."/>
            <person name="Kelly D."/>
            <person name="Bird C."/>
            <person name="Palmer S."/>
            <person name="Gehring I."/>
            <person name="Berger A."/>
            <person name="Dooley C.M."/>
            <person name="Ersan-Urun Z."/>
            <person name="Eser C."/>
            <person name="Geiger H."/>
            <person name="Geisler M."/>
            <person name="Karotki L."/>
            <person name="Kirn A."/>
            <person name="Konantz J."/>
            <person name="Konantz M."/>
            <person name="Oberlander M."/>
            <person name="Rudolph-Geiger S."/>
            <person name="Teucke M."/>
            <person name="Lanz C."/>
            <person name="Raddatz G."/>
            <person name="Osoegawa K."/>
            <person name="Zhu B."/>
            <person name="Rapp A."/>
            <person name="Widaa S."/>
            <person name="Langford C."/>
            <person name="Yang F."/>
            <person name="Schuster S.C."/>
            <person name="Carter N.P."/>
            <person name="Harrow J."/>
            <person name="Ning Z."/>
            <person name="Herrero J."/>
            <person name="Searle S.M."/>
            <person name="Enright A."/>
            <person name="Geisler R."/>
            <person name="Plasterk R.H."/>
            <person name="Lee C."/>
            <person name="Westerfield M."/>
            <person name="de Jong P.J."/>
            <person name="Zon L.I."/>
            <person name="Postlethwait J.H."/>
            <person name="Nusslein-Volhard C."/>
            <person name="Hubbard T.J."/>
            <person name="Roest Crollius H."/>
            <person name="Rogers J."/>
            <person name="Stemple D.L."/>
        </authorList>
    </citation>
    <scope>NUCLEOTIDE SEQUENCE [LARGE SCALE GENOMIC DNA]</scope>
    <source>
        <strain>Tuebingen</strain>
    </source>
</reference>
<reference key="2">
    <citation type="submission" date="2004-11" db="EMBL/GenBank/DDBJ databases">
        <authorList>
            <consortium name="NIH - Zebrafish Gene Collection (ZGC) project"/>
        </authorList>
    </citation>
    <scope>NUCLEOTIDE SEQUENCE [LARGE SCALE MRNA]</scope>
    <source>
        <tissue>Embryo</tissue>
    </source>
</reference>
<reference key="3">
    <citation type="journal article" date="2007" name="Biochem. Biophys. Res. Commun.">
        <title>Identification of zygotic genes expressed at the midblastula transition in zebrafish.</title>
        <authorList>
            <person name="O'Boyle S."/>
            <person name="Bree R.T."/>
            <person name="McLoughlin S."/>
            <person name="Grealy M."/>
            <person name="Byrnes L."/>
        </authorList>
    </citation>
    <scope>NUCLEOTIDE SEQUENCE [MRNA] OF 104-258</scope>
    <source>
        <tissue>Blastula</tissue>
    </source>
</reference>
<reference key="4">
    <citation type="submission" date="2009-02" db="EMBL/GenBank/DDBJ databases">
        <authorList>
            <person name="O'Boyle S.T."/>
        </authorList>
    </citation>
    <scope>SEQUENCE REVISION TO N-TERMINUS OF FRAGMENT</scope>
</reference>
<reference key="5">
    <citation type="journal article" date="2024" name="Am. J. Hum. Genet.">
        <title>Bi-allelic variants in SNF8 cause a disease spectrum ranging from severe developmental and epileptic encephalopathy to syndromic optic atrophy.</title>
        <authorList>
            <person name="Brugger M."/>
            <person name="Lauri A."/>
            <person name="Zhen Y."/>
            <person name="Gramegna L.L."/>
            <person name="Zott B."/>
            <person name="Sekulic N."/>
            <person name="Fasano G."/>
            <person name="Kopajtich R."/>
            <person name="Cordeddu V."/>
            <person name="Radio F.C."/>
            <person name="Mancini C."/>
            <person name="Pizzi S."/>
            <person name="Paradisi G."/>
            <person name="Zanni G."/>
            <person name="Vasco G."/>
            <person name="Carrozzo R."/>
            <person name="Palombo F."/>
            <person name="Tonon C."/>
            <person name="Lodi R."/>
            <person name="La Morgia C."/>
            <person name="Arelin M."/>
            <person name="Blechschmidt C."/>
            <person name="Finck T."/>
            <person name="Soerensen V."/>
            <person name="Kreiser K."/>
            <person name="Strobl-Wildemann G."/>
            <person name="Daum H."/>
            <person name="Michaelson-Cohen R."/>
            <person name="Ziccardi L."/>
            <person name="Zampino G."/>
            <person name="Prokisch H."/>
            <person name="Abou Jamra R."/>
            <person name="Fiorini C."/>
            <person name="Arzberger T."/>
            <person name="Winkelmann J."/>
            <person name="Caporali L."/>
            <person name="Carelli V."/>
            <person name="Stenmark H."/>
            <person name="Tartaglia M."/>
            <person name="Wagner M."/>
        </authorList>
    </citation>
    <scope>DISRUPTION PHENOTYPE</scope>
</reference>
<sequence length="258" mass="28850">MHRRGVGAGAIAKKKLAEAKYKERGSVLAEDQIAQMSKQLDTFKTHLEEFASKHKQEIRKSSQFRVQFQEMCATIGVDPLASGKGFWSEMLGVGDFYYELGVQIIEVCLALKHRNGGLITLDELHHRVLKGRGKFAQDVSQDDLVRAIKKLKAMGNGFGMIPVGGTYLVQSVPAELNMDHTVVLQLAEKKGYVTVSEIRESLKWEKERACHVLDHLLKEGLAWLDSQAAGEPQYWLPALFSELLSQDVTPEEANQMTP</sequence>
<name>SNF8_DANRE</name>
<evidence type="ECO:0000250" key="1"/>
<evidence type="ECO:0000250" key="2">
    <source>
        <dbReference type="UniProtKB" id="Q96H20"/>
    </source>
</evidence>
<evidence type="ECO:0000255" key="3"/>
<evidence type="ECO:0000269" key="4">
    <source>
    </source>
</evidence>
<evidence type="ECO:0000305" key="5"/>
<dbReference type="EMBL" id="CR926135">
    <property type="protein sequence ID" value="CAK05456.1"/>
    <property type="molecule type" value="Genomic_DNA"/>
</dbReference>
<dbReference type="EMBL" id="BC085373">
    <property type="protein sequence ID" value="AAH85373.1"/>
    <property type="molecule type" value="mRNA"/>
</dbReference>
<dbReference type="EMBL" id="AM422108">
    <property type="protein sequence ID" value="CAM12249.2"/>
    <property type="molecule type" value="mRNA"/>
</dbReference>
<dbReference type="RefSeq" id="NP_001007413.1">
    <property type="nucleotide sequence ID" value="NM_001007412.1"/>
</dbReference>
<dbReference type="SMR" id="Q5U3V9"/>
<dbReference type="FunCoup" id="Q5U3V9">
    <property type="interactions" value="2440"/>
</dbReference>
<dbReference type="STRING" id="7955.ENSDARP00000075332"/>
<dbReference type="PaxDb" id="7955-ENSDARP00000075332"/>
<dbReference type="Ensembl" id="ENSDART00000080888">
    <property type="protein sequence ID" value="ENSDARP00000075332"/>
    <property type="gene ID" value="ENSDARG00000058076"/>
</dbReference>
<dbReference type="GeneID" id="492771"/>
<dbReference type="KEGG" id="dre:492771"/>
<dbReference type="AGR" id="ZFIN:ZDB-GENE-041114-117"/>
<dbReference type="CTD" id="11267"/>
<dbReference type="ZFIN" id="ZDB-GENE-041114-117">
    <property type="gene designation" value="snf8"/>
</dbReference>
<dbReference type="eggNOG" id="KOG3341">
    <property type="taxonomic scope" value="Eukaryota"/>
</dbReference>
<dbReference type="HOGENOM" id="CLU_070147_2_0_1"/>
<dbReference type="InParanoid" id="Q5U3V9"/>
<dbReference type="OMA" id="QIVEVCM"/>
<dbReference type="OrthoDB" id="283883at2759"/>
<dbReference type="PhylomeDB" id="Q5U3V9"/>
<dbReference type="TreeFam" id="TF105950"/>
<dbReference type="Reactome" id="R-DRE-917729">
    <property type="pathway name" value="Endosomal Sorting Complex Required For Transport (ESCRT)"/>
</dbReference>
<dbReference type="PRO" id="PR:Q5U3V9"/>
<dbReference type="Proteomes" id="UP000000437">
    <property type="component" value="Chromosome 12"/>
</dbReference>
<dbReference type="Bgee" id="ENSDARG00000058076">
    <property type="expression patterns" value="Expressed in granulocyte and 21 other cell types or tissues"/>
</dbReference>
<dbReference type="GO" id="GO:0000814">
    <property type="term" value="C:ESCRT II complex"/>
    <property type="evidence" value="ECO:0000318"/>
    <property type="project" value="GO_Central"/>
</dbReference>
<dbReference type="GO" id="GO:0030900">
    <property type="term" value="P:forebrain development"/>
    <property type="evidence" value="ECO:0000315"/>
    <property type="project" value="ZFIN"/>
</dbReference>
<dbReference type="GO" id="GO:0061360">
    <property type="term" value="P:optic chiasma development"/>
    <property type="evidence" value="ECO:0000315"/>
    <property type="project" value="ZFIN"/>
</dbReference>
<dbReference type="GO" id="GO:0043328">
    <property type="term" value="P:protein transport to vacuole involved in ubiquitin-dependent protein catabolic process via the multivesicular body sorting pathway"/>
    <property type="evidence" value="ECO:0000318"/>
    <property type="project" value="GO_Central"/>
</dbReference>
<dbReference type="FunFam" id="1.10.10.10:FF:000085">
    <property type="entry name" value="Vacuolar-sorting protein SNF8"/>
    <property type="match status" value="1"/>
</dbReference>
<dbReference type="FunFam" id="1.10.10.10:FF:000234">
    <property type="entry name" value="Vacuolar-sorting protein SNF8"/>
    <property type="match status" value="1"/>
</dbReference>
<dbReference type="Gene3D" id="6.10.140.180">
    <property type="match status" value="1"/>
</dbReference>
<dbReference type="Gene3D" id="1.10.10.10">
    <property type="entry name" value="Winged helix-like DNA-binding domain superfamily/Winged helix DNA-binding domain"/>
    <property type="match status" value="2"/>
</dbReference>
<dbReference type="InterPro" id="IPR016689">
    <property type="entry name" value="ESCRT-2_cplx_Snf8"/>
</dbReference>
<dbReference type="InterPro" id="IPR040608">
    <property type="entry name" value="Snf8/Vps36"/>
</dbReference>
<dbReference type="InterPro" id="IPR036388">
    <property type="entry name" value="WH-like_DNA-bd_sf"/>
</dbReference>
<dbReference type="InterPro" id="IPR036390">
    <property type="entry name" value="WH_DNA-bd_sf"/>
</dbReference>
<dbReference type="PANTHER" id="PTHR12806">
    <property type="entry name" value="EAP30 SUBUNIT OF ELL COMPLEX"/>
    <property type="match status" value="1"/>
</dbReference>
<dbReference type="PANTHER" id="PTHR12806:SF0">
    <property type="entry name" value="VACUOLAR-SORTING PROTEIN SNF8"/>
    <property type="match status" value="1"/>
</dbReference>
<dbReference type="Pfam" id="PF04157">
    <property type="entry name" value="EAP30"/>
    <property type="match status" value="1"/>
</dbReference>
<dbReference type="PIRSF" id="PIRSF017215">
    <property type="entry name" value="ESCRT2_Vps22"/>
    <property type="match status" value="1"/>
</dbReference>
<dbReference type="SUPFAM" id="SSF46785">
    <property type="entry name" value="Winged helix' DNA-binding domain"/>
    <property type="match status" value="2"/>
</dbReference>
<organism>
    <name type="scientific">Danio rerio</name>
    <name type="common">Zebrafish</name>
    <name type="synonym">Brachydanio rerio</name>
    <dbReference type="NCBI Taxonomy" id="7955"/>
    <lineage>
        <taxon>Eukaryota</taxon>
        <taxon>Metazoa</taxon>
        <taxon>Chordata</taxon>
        <taxon>Craniata</taxon>
        <taxon>Vertebrata</taxon>
        <taxon>Euteleostomi</taxon>
        <taxon>Actinopterygii</taxon>
        <taxon>Neopterygii</taxon>
        <taxon>Teleostei</taxon>
        <taxon>Ostariophysi</taxon>
        <taxon>Cypriniformes</taxon>
        <taxon>Danionidae</taxon>
        <taxon>Danioninae</taxon>
        <taxon>Danio</taxon>
    </lineage>
</organism>
<feature type="chain" id="PRO_0000215212" description="Vacuolar-sorting protein SNF8">
    <location>
        <begin position="1"/>
        <end position="258"/>
    </location>
</feature>
<feature type="coiled-coil region" evidence="3">
    <location>
        <begin position="28"/>
        <end position="50"/>
    </location>
</feature>
<feature type="sequence conflict" description="In Ref. 2; AAH85373." evidence="5" ref="2">
    <original>S</original>
    <variation>P</variation>
    <location>
        <position position="88"/>
    </location>
</feature>
<feature type="sequence conflict" description="In Ref. 3; CAM12249." evidence="5" ref="3">
    <original>I</original>
    <variation>T</variation>
    <location>
        <position position="119"/>
    </location>
</feature>
<gene>
    <name type="primary">snf8</name>
    <name type="ORF">si:dkey-220f10.1</name>
    <name type="ORF">zgc:101578</name>
</gene>
<protein>
    <recommendedName>
        <fullName>Vacuolar-sorting protein SNF8</fullName>
    </recommendedName>
    <alternativeName>
        <fullName>ESCRT-II complex subunit VPS22</fullName>
    </alternativeName>
</protein>
<keyword id="KW-0175">Coiled coil</keyword>
<keyword id="KW-0963">Cytoplasm</keyword>
<keyword id="KW-0653">Protein transport</keyword>
<keyword id="KW-1185">Reference proteome</keyword>
<keyword id="KW-0813">Transport</keyword>